<keyword id="KW-1003">Cell membrane</keyword>
<keyword id="KW-0963">Cytoplasm</keyword>
<keyword id="KW-0254">Endocytosis</keyword>
<keyword id="KW-0256">Endoplasmic reticulum</keyword>
<keyword id="KW-0967">Endosome</keyword>
<keyword id="KW-0333">Golgi apparatus</keyword>
<keyword id="KW-0458">Lysosome</keyword>
<keyword id="KW-0472">Membrane</keyword>
<keyword id="KW-0479">Metal-binding</keyword>
<keyword id="KW-1185">Reference proteome</keyword>
<keyword id="KW-0808">Transferase</keyword>
<keyword id="KW-0812">Transmembrane</keyword>
<keyword id="KW-1133">Transmembrane helix</keyword>
<keyword id="KW-0833">Ubl conjugation pathway</keyword>
<keyword id="KW-0862">Zinc</keyword>
<keyword id="KW-0863">Zinc-finger</keyword>
<reference key="1">
    <citation type="journal article" date="2005" name="Science">
        <title>The transcriptional landscape of the mammalian genome.</title>
        <authorList>
            <person name="Carninci P."/>
            <person name="Kasukawa T."/>
            <person name="Katayama S."/>
            <person name="Gough J."/>
            <person name="Frith M.C."/>
            <person name="Maeda N."/>
            <person name="Oyama R."/>
            <person name="Ravasi T."/>
            <person name="Lenhard B."/>
            <person name="Wells C."/>
            <person name="Kodzius R."/>
            <person name="Shimokawa K."/>
            <person name="Bajic V.B."/>
            <person name="Brenner S.E."/>
            <person name="Batalov S."/>
            <person name="Forrest A.R."/>
            <person name="Zavolan M."/>
            <person name="Davis M.J."/>
            <person name="Wilming L.G."/>
            <person name="Aidinis V."/>
            <person name="Allen J.E."/>
            <person name="Ambesi-Impiombato A."/>
            <person name="Apweiler R."/>
            <person name="Aturaliya R.N."/>
            <person name="Bailey T.L."/>
            <person name="Bansal M."/>
            <person name="Baxter L."/>
            <person name="Beisel K.W."/>
            <person name="Bersano T."/>
            <person name="Bono H."/>
            <person name="Chalk A.M."/>
            <person name="Chiu K.P."/>
            <person name="Choudhary V."/>
            <person name="Christoffels A."/>
            <person name="Clutterbuck D.R."/>
            <person name="Crowe M.L."/>
            <person name="Dalla E."/>
            <person name="Dalrymple B.P."/>
            <person name="de Bono B."/>
            <person name="Della Gatta G."/>
            <person name="di Bernardo D."/>
            <person name="Down T."/>
            <person name="Engstrom P."/>
            <person name="Fagiolini M."/>
            <person name="Faulkner G."/>
            <person name="Fletcher C.F."/>
            <person name="Fukushima T."/>
            <person name="Furuno M."/>
            <person name="Futaki S."/>
            <person name="Gariboldi M."/>
            <person name="Georgii-Hemming P."/>
            <person name="Gingeras T.R."/>
            <person name="Gojobori T."/>
            <person name="Green R.E."/>
            <person name="Gustincich S."/>
            <person name="Harbers M."/>
            <person name="Hayashi Y."/>
            <person name="Hensch T.K."/>
            <person name="Hirokawa N."/>
            <person name="Hill D."/>
            <person name="Huminiecki L."/>
            <person name="Iacono M."/>
            <person name="Ikeo K."/>
            <person name="Iwama A."/>
            <person name="Ishikawa T."/>
            <person name="Jakt M."/>
            <person name="Kanapin A."/>
            <person name="Katoh M."/>
            <person name="Kawasawa Y."/>
            <person name="Kelso J."/>
            <person name="Kitamura H."/>
            <person name="Kitano H."/>
            <person name="Kollias G."/>
            <person name="Krishnan S.P."/>
            <person name="Kruger A."/>
            <person name="Kummerfeld S.K."/>
            <person name="Kurochkin I.V."/>
            <person name="Lareau L.F."/>
            <person name="Lazarevic D."/>
            <person name="Lipovich L."/>
            <person name="Liu J."/>
            <person name="Liuni S."/>
            <person name="McWilliam S."/>
            <person name="Madan Babu M."/>
            <person name="Madera M."/>
            <person name="Marchionni L."/>
            <person name="Matsuda H."/>
            <person name="Matsuzawa S."/>
            <person name="Miki H."/>
            <person name="Mignone F."/>
            <person name="Miyake S."/>
            <person name="Morris K."/>
            <person name="Mottagui-Tabar S."/>
            <person name="Mulder N."/>
            <person name="Nakano N."/>
            <person name="Nakauchi H."/>
            <person name="Ng P."/>
            <person name="Nilsson R."/>
            <person name="Nishiguchi S."/>
            <person name="Nishikawa S."/>
            <person name="Nori F."/>
            <person name="Ohara O."/>
            <person name="Okazaki Y."/>
            <person name="Orlando V."/>
            <person name="Pang K.C."/>
            <person name="Pavan W.J."/>
            <person name="Pavesi G."/>
            <person name="Pesole G."/>
            <person name="Petrovsky N."/>
            <person name="Piazza S."/>
            <person name="Reed J."/>
            <person name="Reid J.F."/>
            <person name="Ring B.Z."/>
            <person name="Ringwald M."/>
            <person name="Rost B."/>
            <person name="Ruan Y."/>
            <person name="Salzberg S.L."/>
            <person name="Sandelin A."/>
            <person name="Schneider C."/>
            <person name="Schoenbach C."/>
            <person name="Sekiguchi K."/>
            <person name="Semple C.A."/>
            <person name="Seno S."/>
            <person name="Sessa L."/>
            <person name="Sheng Y."/>
            <person name="Shibata Y."/>
            <person name="Shimada H."/>
            <person name="Shimada K."/>
            <person name="Silva D."/>
            <person name="Sinclair B."/>
            <person name="Sperling S."/>
            <person name="Stupka E."/>
            <person name="Sugiura K."/>
            <person name="Sultana R."/>
            <person name="Takenaka Y."/>
            <person name="Taki K."/>
            <person name="Tammoja K."/>
            <person name="Tan S.L."/>
            <person name="Tang S."/>
            <person name="Taylor M.S."/>
            <person name="Tegner J."/>
            <person name="Teichmann S.A."/>
            <person name="Ueda H.R."/>
            <person name="van Nimwegen E."/>
            <person name="Verardo R."/>
            <person name="Wei C.L."/>
            <person name="Yagi K."/>
            <person name="Yamanishi H."/>
            <person name="Zabarovsky E."/>
            <person name="Zhu S."/>
            <person name="Zimmer A."/>
            <person name="Hide W."/>
            <person name="Bult C."/>
            <person name="Grimmond S.M."/>
            <person name="Teasdale R.D."/>
            <person name="Liu E.T."/>
            <person name="Brusic V."/>
            <person name="Quackenbush J."/>
            <person name="Wahlestedt C."/>
            <person name="Mattick J.S."/>
            <person name="Hume D.A."/>
            <person name="Kai C."/>
            <person name="Sasaki D."/>
            <person name="Tomaru Y."/>
            <person name="Fukuda S."/>
            <person name="Kanamori-Katayama M."/>
            <person name="Suzuki M."/>
            <person name="Aoki J."/>
            <person name="Arakawa T."/>
            <person name="Iida J."/>
            <person name="Imamura K."/>
            <person name="Itoh M."/>
            <person name="Kato T."/>
            <person name="Kawaji H."/>
            <person name="Kawagashira N."/>
            <person name="Kawashima T."/>
            <person name="Kojima M."/>
            <person name="Kondo S."/>
            <person name="Konno H."/>
            <person name="Nakano K."/>
            <person name="Ninomiya N."/>
            <person name="Nishio T."/>
            <person name="Okada M."/>
            <person name="Plessy C."/>
            <person name="Shibata K."/>
            <person name="Shiraki T."/>
            <person name="Suzuki S."/>
            <person name="Tagami M."/>
            <person name="Waki K."/>
            <person name="Watahiki A."/>
            <person name="Okamura-Oho Y."/>
            <person name="Suzuki H."/>
            <person name="Kawai J."/>
            <person name="Hayashizaki Y."/>
        </authorList>
    </citation>
    <scope>NUCLEOTIDE SEQUENCE [LARGE SCALE MRNA]</scope>
    <source>
        <strain>C57BL/6J</strain>
        <tissue>Head</tissue>
        <tissue>Urinary bladder</tissue>
    </source>
</reference>
<reference key="2">
    <citation type="journal article" date="2004" name="Genome Res.">
        <title>The status, quality, and expansion of the NIH full-length cDNA project: the Mammalian Gene Collection (MGC).</title>
        <authorList>
            <consortium name="The MGC Project Team"/>
        </authorList>
    </citation>
    <scope>NUCLEOTIDE SEQUENCE [LARGE SCALE MRNA]</scope>
    <source>
        <strain>FVB/N</strain>
        <tissue>Mammary tumor</tissue>
    </source>
</reference>
<reference key="3">
    <citation type="journal article" date="2020" name="EMBO J.">
        <title>Negative regulation of NEMO signaling by the ubiquitin E3 ligase MARCH2.</title>
        <authorList>
            <person name="Chathuranga K."/>
            <person name="Kim T.H."/>
            <person name="Lee H."/>
            <person name="Park J.S."/>
            <person name="Kim J.H."/>
            <person name="Chathuranga W.A.G."/>
            <person name="Ekanayaka P."/>
            <person name="Choi Y.J."/>
            <person name="Lee C.H."/>
            <person name="Kim C.J."/>
            <person name="Jung J.U."/>
            <person name="Lee J.S."/>
        </authorList>
    </citation>
    <scope>FUNCTION</scope>
    <scope>CATALYTIC ACTIVITY</scope>
    <scope>INTERACTION WITH IKBKG</scope>
    <scope>INDUCTION BY VIRAL AND BACTERIAL INFECTION</scope>
    <scope>DISRUPTION PHENOTYPE</scope>
</reference>
<name>MARH2_MOUSE</name>
<proteinExistence type="evidence at protein level"/>
<feature type="chain" id="PRO_0000055926" description="E3 ubiquitin-protein ligase MARCHF2">
    <location>
        <begin position="1"/>
        <end position="246"/>
    </location>
</feature>
<feature type="transmembrane region" description="Helical" evidence="3">
    <location>
        <begin position="138"/>
        <end position="158"/>
    </location>
</feature>
<feature type="transmembrane region" description="Helical" evidence="3">
    <location>
        <begin position="175"/>
        <end position="195"/>
    </location>
</feature>
<feature type="zinc finger region" description="RING-CH-type" evidence="4">
    <location>
        <begin position="56"/>
        <end position="116"/>
    </location>
</feature>
<feature type="region of interest" description="Required for interaction with IKBKG" evidence="2">
    <location>
        <begin position="121"/>
        <end position="246"/>
    </location>
</feature>
<feature type="binding site" evidence="4">
    <location>
        <position position="64"/>
    </location>
    <ligand>
        <name>Zn(2+)</name>
        <dbReference type="ChEBI" id="CHEBI:29105"/>
        <label>1</label>
    </ligand>
</feature>
<feature type="binding site" evidence="4">
    <location>
        <position position="67"/>
    </location>
    <ligand>
        <name>Zn(2+)</name>
        <dbReference type="ChEBI" id="CHEBI:29105"/>
        <label>1</label>
    </ligand>
</feature>
<feature type="binding site" evidence="4">
    <location>
        <position position="80"/>
    </location>
    <ligand>
        <name>Zn(2+)</name>
        <dbReference type="ChEBI" id="CHEBI:29105"/>
        <label>2</label>
    </ligand>
</feature>
<feature type="binding site" evidence="4">
    <location>
        <position position="82"/>
    </location>
    <ligand>
        <name>Zn(2+)</name>
        <dbReference type="ChEBI" id="CHEBI:29105"/>
        <label>2</label>
    </ligand>
</feature>
<feature type="binding site" evidence="4">
    <location>
        <position position="90"/>
    </location>
    <ligand>
        <name>Zn(2+)</name>
        <dbReference type="ChEBI" id="CHEBI:29105"/>
        <label>1</label>
    </ligand>
</feature>
<feature type="binding site" evidence="4">
    <location>
        <position position="93"/>
    </location>
    <ligand>
        <name>Zn(2+)</name>
        <dbReference type="ChEBI" id="CHEBI:29105"/>
        <label>1</label>
    </ligand>
</feature>
<feature type="binding site" evidence="4">
    <location>
        <position position="106"/>
    </location>
    <ligand>
        <name>Zn(2+)</name>
        <dbReference type="ChEBI" id="CHEBI:29105"/>
        <label>2</label>
    </ligand>
</feature>
<feature type="binding site" evidence="4">
    <location>
        <position position="109"/>
    </location>
    <ligand>
        <name>Zn(2+)</name>
        <dbReference type="ChEBI" id="CHEBI:29105"/>
        <label>2</label>
    </ligand>
</feature>
<comment type="function">
    <text evidence="2 5">E3 ubiquitin-protein ligase that may mediate ubiquitination of TFRC and CD86, and promote their subsequent endocytosis and sorting to lysosomes via multivesicular bodies. E3 ubiquitin ligases accept ubiquitin from an E2 ubiquitin-conjugating enzyme in the form of a thioester and then directly transfer the ubiquitin to targeted substrates. Together with GOPC/CAL mediates the ubiquitination and lysosomal degradation of CFTR (By similarity). Ubiquitinates and therefore mediates the degradation of DLG1 (By similarity). Regulates the intracellular trafficking and secretion of alpha1-antitrypsin/SERPINA1 and HP/haptoglobin via ubiquitination and degradation of the cargo receptor ERGIC3 (By similarity). Negatively regulates the antiviral and antibacterial immune response by repression of the NF-kB and type 1 IFN signaling pathways, via MARCHF2-mediated K48-linked polyubiquitination of IKBKG/NEMO, resulting in its proteasomal degradation (PubMed:32935379). May be involved in endosomal trafficking through interaction with STX6.</text>
</comment>
<comment type="catalytic activity">
    <reaction evidence="5">
        <text>S-ubiquitinyl-[E2 ubiquitin-conjugating enzyme]-L-cysteine + [acceptor protein]-L-lysine = [E2 ubiquitin-conjugating enzyme]-L-cysteine + N(6)-ubiquitinyl-[acceptor protein]-L-lysine.</text>
        <dbReference type="EC" id="2.3.2.27"/>
    </reaction>
</comment>
<comment type="pathway">
    <text evidence="5">Protein modification; protein ubiquitination.</text>
</comment>
<comment type="subunit">
    <text evidence="2 5">Interacts with STX6; the interaction promotes MARCHF2-mediated ubiquitination and degradation of CFTR (By similarity). Interacts with MARCHF3 (By similarity). Interacts with GOPC/CAL; the interaction leads to CFTR ubiquitination and degradation (By similarity). Interacts with CFTR; the interaction leads to CFTR ubiqtuitination and degradation (By similarity). Interacts (via PDZ domain) with DLG1 (via PDZ domains); the interaction leads to DLG1 ubiqtuitination and degradation (By similarity). Interacts with ERGIC3 (By similarity). Interacts with ADRB2 (By similarity). Interacts with IKBKG/NEMO; during the late stages of macrophage viral and bacterial infection; the interaction leads to ubiquitination and degradation of IKBKG/NEMO (PubMed:32935379).</text>
</comment>
<comment type="subcellular location">
    <subcellularLocation>
        <location evidence="2">Endoplasmic reticulum membrane</location>
        <topology evidence="1">Multi-pass membrane protein</topology>
    </subcellularLocation>
    <subcellularLocation>
        <location evidence="2">Lysosome membrane</location>
        <topology evidence="3">Multi-pass membrane protein</topology>
    </subcellularLocation>
    <subcellularLocation>
        <location evidence="2">Endosome membrane</location>
        <topology evidence="1">Multi-pass membrane protein</topology>
    </subcellularLocation>
    <subcellularLocation>
        <location evidence="2">Golgi apparatus membrane</location>
        <topology evidence="2">Multi-pass membrane protein</topology>
    </subcellularLocation>
    <subcellularLocation>
        <location evidence="2">Cytoplasm</location>
    </subcellularLocation>
    <subcellularLocation>
        <location evidence="2">Cell membrane</location>
        <topology evidence="3">Multi-pass membrane protein</topology>
    </subcellularLocation>
</comment>
<comment type="induction">
    <text evidence="5">Induced in macrophages by viral or bacterial infection.</text>
</comment>
<comment type="domain">
    <text evidence="4">The RING-CH-type zinc finger domain is required for E3 ligase activity.</text>
</comment>
<comment type="disruption phenotype">
    <text evidence="5">Knockout mice are phenotypically normal (PubMed:32935379). Increase in cytokine production following viral and bacterial challenge, including increases in Ifnb1, Il6, Il12, Ccl5, Cxcl10 and Tnf protein abundance (PubMed:32935379). Increase in survival following exposure to a lethal dose of L.monocytogenes and decrease in bacterial load in the spleen and liver (PubMed:32935379). Increase in susceptibility to endotoxin shock (PubMed:32935379).</text>
</comment>
<comment type="sequence caution" evidence="6">
    <conflict type="frameshift">
        <sequence resource="EMBL-CDS" id="BAC38235"/>
    </conflict>
</comment>
<accession>Q99M02</accession>
<accession>Q8C4Q5</accession>
<gene>
    <name type="primary">Marchf2</name>
    <name type="synonym">March2</name>
    <name type="synonym">Rnf172</name>
</gene>
<organism>
    <name type="scientific">Mus musculus</name>
    <name type="common">Mouse</name>
    <dbReference type="NCBI Taxonomy" id="10090"/>
    <lineage>
        <taxon>Eukaryota</taxon>
        <taxon>Metazoa</taxon>
        <taxon>Chordata</taxon>
        <taxon>Craniata</taxon>
        <taxon>Vertebrata</taxon>
        <taxon>Euteleostomi</taxon>
        <taxon>Mammalia</taxon>
        <taxon>Eutheria</taxon>
        <taxon>Euarchontoglires</taxon>
        <taxon>Glires</taxon>
        <taxon>Rodentia</taxon>
        <taxon>Myomorpha</taxon>
        <taxon>Muroidea</taxon>
        <taxon>Muridae</taxon>
        <taxon>Murinae</taxon>
        <taxon>Mus</taxon>
        <taxon>Mus</taxon>
    </lineage>
</organism>
<sequence>MTTGDCCHLPGSLCDCSSSPAFSKVVEATGLGPPQYVAQVTSRDGRLLSTVIRALDSQSDCPFCRICHEGANGENLLSPCGCTGTLGAVHKSCLEKWLSSSNTSYCELCHTEFAVEKRPRPLTEWLKDPGPRTEKRTLCCDMVCFVFITPLAAISGWLCLRGAQDHLRLHSRLEAVGLIALTIALFTIYVLWTLVSFRYHCQLYSEWRKTNQKVRLKIREADGSEDPHHSLLATGLLKKVAEETPV</sequence>
<protein>
    <recommendedName>
        <fullName>E3 ubiquitin-protein ligase MARCHF2</fullName>
        <ecNumber evidence="2">2.3.2.27</ecNumber>
    </recommendedName>
    <alternativeName>
        <fullName>Membrane-associated RING finger protein 2</fullName>
    </alternativeName>
    <alternativeName>
        <fullName>Membrane-associated RING-CH protein II</fullName>
        <shortName>MARCH-II</shortName>
    </alternativeName>
    <alternativeName>
        <fullName evidence="2">RING finger protein 172</fullName>
    </alternativeName>
    <alternativeName>
        <fullName evidence="6">RING-type E3 ubiquitin transferase MARCHF2</fullName>
    </alternativeName>
</protein>
<evidence type="ECO:0000250" key="1">
    <source>
        <dbReference type="UniProtKB" id="Q5I0I2"/>
    </source>
</evidence>
<evidence type="ECO:0000250" key="2">
    <source>
        <dbReference type="UniProtKB" id="Q9P0N8"/>
    </source>
</evidence>
<evidence type="ECO:0000255" key="3"/>
<evidence type="ECO:0000255" key="4">
    <source>
        <dbReference type="PROSITE-ProRule" id="PRU00623"/>
    </source>
</evidence>
<evidence type="ECO:0000269" key="5">
    <source>
    </source>
</evidence>
<evidence type="ECO:0000305" key="6"/>
<dbReference type="EC" id="2.3.2.27" evidence="2"/>
<dbReference type="EMBL" id="AK079234">
    <property type="protein sequence ID" value="BAC37584.1"/>
    <property type="molecule type" value="mRNA"/>
</dbReference>
<dbReference type="EMBL" id="AK081495">
    <property type="protein sequence ID" value="BAC38235.1"/>
    <property type="status" value="ALT_FRAME"/>
    <property type="molecule type" value="mRNA"/>
</dbReference>
<dbReference type="EMBL" id="BC002144">
    <property type="protein sequence ID" value="AAH02144.1"/>
    <property type="molecule type" value="mRNA"/>
</dbReference>
<dbReference type="CCDS" id="CCDS57064.1"/>
<dbReference type="RefSeq" id="NP_001239409.1">
    <property type="nucleotide sequence ID" value="NM_001252480.1"/>
</dbReference>
<dbReference type="SMR" id="Q99M02"/>
<dbReference type="FunCoup" id="Q99M02">
    <property type="interactions" value="919"/>
</dbReference>
<dbReference type="STRING" id="10090.ENSMUSP00000065225"/>
<dbReference type="PhosphoSitePlus" id="Q99M02"/>
<dbReference type="PaxDb" id="10090-ENSMUSP00000065225"/>
<dbReference type="ProteomicsDB" id="292169"/>
<dbReference type="Antibodypedia" id="2987">
    <property type="antibodies" value="186 antibodies from 27 providers"/>
</dbReference>
<dbReference type="DNASU" id="224703"/>
<dbReference type="Ensembl" id="ENSMUST00000172767.9">
    <property type="protein sequence ID" value="ENSMUSP00000134220.2"/>
    <property type="gene ID" value="ENSMUSG00000079557.12"/>
</dbReference>
<dbReference type="GeneID" id="224703"/>
<dbReference type="KEGG" id="mmu:224703"/>
<dbReference type="UCSC" id="uc008bzk.2">
    <property type="organism name" value="mouse"/>
</dbReference>
<dbReference type="AGR" id="MGI:1925915"/>
<dbReference type="CTD" id="51257"/>
<dbReference type="MGI" id="MGI:1925915">
    <property type="gene designation" value="Marchf2"/>
</dbReference>
<dbReference type="VEuPathDB" id="HostDB:ENSMUSG00000079557"/>
<dbReference type="eggNOG" id="KOG1609">
    <property type="taxonomic scope" value="Eukaryota"/>
</dbReference>
<dbReference type="GeneTree" id="ENSGT00940000158995"/>
<dbReference type="InParanoid" id="Q99M02"/>
<dbReference type="OMA" id="ICHEGNN"/>
<dbReference type="OrthoDB" id="273089at2759"/>
<dbReference type="PhylomeDB" id="Q99M02"/>
<dbReference type="UniPathway" id="UPA00143"/>
<dbReference type="BioGRID-ORCS" id="224703">
    <property type="hits" value="1 hit in 17 CRISPR screens"/>
</dbReference>
<dbReference type="ChiTaRS" id="March2">
    <property type="organism name" value="mouse"/>
</dbReference>
<dbReference type="PRO" id="PR:Q99M02"/>
<dbReference type="Proteomes" id="UP000000589">
    <property type="component" value="Chromosome 17"/>
</dbReference>
<dbReference type="RNAct" id="Q99M02">
    <property type="molecule type" value="protein"/>
</dbReference>
<dbReference type="Bgee" id="ENSMUSG00000079557">
    <property type="expression patterns" value="Expressed in blood and 270 other cell types or tissues"/>
</dbReference>
<dbReference type="ExpressionAtlas" id="Q99M02">
    <property type="expression patterns" value="baseline and differential"/>
</dbReference>
<dbReference type="GO" id="GO:0005737">
    <property type="term" value="C:cytoplasm"/>
    <property type="evidence" value="ECO:0000250"/>
    <property type="project" value="UniProtKB"/>
</dbReference>
<dbReference type="GO" id="GO:0031410">
    <property type="term" value="C:cytoplasmic vesicle"/>
    <property type="evidence" value="ECO:0000250"/>
    <property type="project" value="UniProtKB"/>
</dbReference>
<dbReference type="GO" id="GO:0005829">
    <property type="term" value="C:cytosol"/>
    <property type="evidence" value="ECO:0007669"/>
    <property type="project" value="Ensembl"/>
</dbReference>
<dbReference type="GO" id="GO:0005783">
    <property type="term" value="C:endoplasmic reticulum"/>
    <property type="evidence" value="ECO:0000250"/>
    <property type="project" value="UniProtKB"/>
</dbReference>
<dbReference type="GO" id="GO:0005789">
    <property type="term" value="C:endoplasmic reticulum membrane"/>
    <property type="evidence" value="ECO:0007669"/>
    <property type="project" value="UniProtKB-SubCell"/>
</dbReference>
<dbReference type="GO" id="GO:0010008">
    <property type="term" value="C:endosome membrane"/>
    <property type="evidence" value="ECO:0007669"/>
    <property type="project" value="UniProtKB-SubCell"/>
</dbReference>
<dbReference type="GO" id="GO:0000139">
    <property type="term" value="C:Golgi membrane"/>
    <property type="evidence" value="ECO:0007669"/>
    <property type="project" value="UniProtKB-SubCell"/>
</dbReference>
<dbReference type="GO" id="GO:0005765">
    <property type="term" value="C:lysosomal membrane"/>
    <property type="evidence" value="ECO:0007669"/>
    <property type="project" value="UniProtKB-SubCell"/>
</dbReference>
<dbReference type="GO" id="GO:0005886">
    <property type="term" value="C:plasma membrane"/>
    <property type="evidence" value="ECO:0000250"/>
    <property type="project" value="UniProtKB"/>
</dbReference>
<dbReference type="GO" id="GO:0061630">
    <property type="term" value="F:ubiquitin protein ligase activity"/>
    <property type="evidence" value="ECO:0000250"/>
    <property type="project" value="UniProtKB"/>
</dbReference>
<dbReference type="GO" id="GO:0008270">
    <property type="term" value="F:zinc ion binding"/>
    <property type="evidence" value="ECO:0007669"/>
    <property type="project" value="UniProtKB-KW"/>
</dbReference>
<dbReference type="GO" id="GO:0140367">
    <property type="term" value="P:antibacterial innate immune response"/>
    <property type="evidence" value="ECO:0000315"/>
    <property type="project" value="UniProtKB"/>
</dbReference>
<dbReference type="GO" id="GO:0140374">
    <property type="term" value="P:antiviral innate immune response"/>
    <property type="evidence" value="ECO:0000315"/>
    <property type="project" value="UniProtKB"/>
</dbReference>
<dbReference type="GO" id="GO:0006897">
    <property type="term" value="P:endocytosis"/>
    <property type="evidence" value="ECO:0007669"/>
    <property type="project" value="UniProtKB-KW"/>
</dbReference>
<dbReference type="GO" id="GO:1905167">
    <property type="term" value="P:positive regulation of lysosomal protein catabolic process"/>
    <property type="evidence" value="ECO:0007669"/>
    <property type="project" value="Ensembl"/>
</dbReference>
<dbReference type="GO" id="GO:0016567">
    <property type="term" value="P:protein ubiquitination"/>
    <property type="evidence" value="ECO:0000250"/>
    <property type="project" value="UniProtKB"/>
</dbReference>
<dbReference type="GO" id="GO:0044790">
    <property type="term" value="P:suppression of viral release by host"/>
    <property type="evidence" value="ECO:0007669"/>
    <property type="project" value="Ensembl"/>
</dbReference>
<dbReference type="CDD" id="cd16808">
    <property type="entry name" value="RING_CH-C4HC3_MARCH2"/>
    <property type="match status" value="1"/>
</dbReference>
<dbReference type="FunFam" id="3.30.40.10:FF:000119">
    <property type="entry name" value="E3 ubiquitin-protein ligase MARCH2"/>
    <property type="match status" value="1"/>
</dbReference>
<dbReference type="Gene3D" id="3.30.40.10">
    <property type="entry name" value="Zinc/RING finger domain, C3HC4 (zinc finger)"/>
    <property type="match status" value="1"/>
</dbReference>
<dbReference type="InterPro" id="IPR001841">
    <property type="entry name" value="Znf_RING"/>
</dbReference>
<dbReference type="InterPro" id="IPR011016">
    <property type="entry name" value="Znf_RING-CH"/>
</dbReference>
<dbReference type="InterPro" id="IPR013083">
    <property type="entry name" value="Znf_RING/FYVE/PHD"/>
</dbReference>
<dbReference type="PANTHER" id="PTHR46065">
    <property type="entry name" value="E3 UBIQUITIN-PROTEIN LIGASE MARCH 2/3 FAMILY MEMBER"/>
    <property type="match status" value="1"/>
</dbReference>
<dbReference type="PANTHER" id="PTHR46065:SF4">
    <property type="entry name" value="E3 UBIQUITIN-PROTEIN LIGASE MARCHF2"/>
    <property type="match status" value="1"/>
</dbReference>
<dbReference type="Pfam" id="PF12906">
    <property type="entry name" value="RINGv"/>
    <property type="match status" value="1"/>
</dbReference>
<dbReference type="SMART" id="SM00744">
    <property type="entry name" value="RINGv"/>
    <property type="match status" value="1"/>
</dbReference>
<dbReference type="SUPFAM" id="SSF57850">
    <property type="entry name" value="RING/U-box"/>
    <property type="match status" value="1"/>
</dbReference>
<dbReference type="PROSITE" id="PS51292">
    <property type="entry name" value="ZF_RING_CH"/>
    <property type="match status" value="1"/>
</dbReference>